<dbReference type="EC" id="6.3.5.-" evidence="1"/>
<dbReference type="EMBL" id="BX293980">
    <property type="protein sequence ID" value="CAE77379.1"/>
    <property type="status" value="ALT_INIT"/>
    <property type="molecule type" value="Genomic_DNA"/>
</dbReference>
<dbReference type="RefSeq" id="NP_975737.1">
    <property type="nucleotide sequence ID" value="NC_005364.2"/>
</dbReference>
<dbReference type="RefSeq" id="WP_015545356.1">
    <property type="nucleotide sequence ID" value="NC_005364.2"/>
</dbReference>
<dbReference type="SMR" id="P61345"/>
<dbReference type="STRING" id="272632.MSC_0761"/>
<dbReference type="KEGG" id="mmy:MSC_0761"/>
<dbReference type="PATRIC" id="fig|272632.4.peg.818"/>
<dbReference type="eggNOG" id="COG0064">
    <property type="taxonomic scope" value="Bacteria"/>
</dbReference>
<dbReference type="HOGENOM" id="CLU_019240_0_0_14"/>
<dbReference type="Proteomes" id="UP000001016">
    <property type="component" value="Chromosome"/>
</dbReference>
<dbReference type="GO" id="GO:0050566">
    <property type="term" value="F:asparaginyl-tRNA synthase (glutamine-hydrolyzing) activity"/>
    <property type="evidence" value="ECO:0007669"/>
    <property type="project" value="RHEA"/>
</dbReference>
<dbReference type="GO" id="GO:0005524">
    <property type="term" value="F:ATP binding"/>
    <property type="evidence" value="ECO:0007669"/>
    <property type="project" value="UniProtKB-KW"/>
</dbReference>
<dbReference type="GO" id="GO:0050567">
    <property type="term" value="F:glutaminyl-tRNA synthase (glutamine-hydrolyzing) activity"/>
    <property type="evidence" value="ECO:0007669"/>
    <property type="project" value="UniProtKB-UniRule"/>
</dbReference>
<dbReference type="GO" id="GO:0070681">
    <property type="term" value="P:glutaminyl-tRNAGln biosynthesis via transamidation"/>
    <property type="evidence" value="ECO:0007669"/>
    <property type="project" value="TreeGrafter"/>
</dbReference>
<dbReference type="GO" id="GO:0006412">
    <property type="term" value="P:translation"/>
    <property type="evidence" value="ECO:0007669"/>
    <property type="project" value="UniProtKB-UniRule"/>
</dbReference>
<dbReference type="Gene3D" id="1.10.10.410">
    <property type="match status" value="1"/>
</dbReference>
<dbReference type="Gene3D" id="1.10.150.380">
    <property type="entry name" value="GatB domain, N-terminal subdomain"/>
    <property type="match status" value="1"/>
</dbReference>
<dbReference type="HAMAP" id="MF_00121">
    <property type="entry name" value="GatB"/>
    <property type="match status" value="1"/>
</dbReference>
<dbReference type="InterPro" id="IPR017959">
    <property type="entry name" value="Asn/Gln-tRNA_amidoTrfase_suB/E"/>
</dbReference>
<dbReference type="InterPro" id="IPR006075">
    <property type="entry name" value="Asn/Gln-tRNA_Trfase_suB/E_cat"/>
</dbReference>
<dbReference type="InterPro" id="IPR018027">
    <property type="entry name" value="Asn/Gln_amidotransferase"/>
</dbReference>
<dbReference type="InterPro" id="IPR003789">
    <property type="entry name" value="Asn/Gln_tRNA_amidoTrase-B-like"/>
</dbReference>
<dbReference type="InterPro" id="IPR004413">
    <property type="entry name" value="GatB"/>
</dbReference>
<dbReference type="InterPro" id="IPR042114">
    <property type="entry name" value="GatB_C_1"/>
</dbReference>
<dbReference type="InterPro" id="IPR023168">
    <property type="entry name" value="GatB_Yqey_C_2"/>
</dbReference>
<dbReference type="InterPro" id="IPR017958">
    <property type="entry name" value="Gln-tRNA_amidoTrfase_suB_CS"/>
</dbReference>
<dbReference type="InterPro" id="IPR014746">
    <property type="entry name" value="Gln_synth/guanido_kin_cat_dom"/>
</dbReference>
<dbReference type="NCBIfam" id="TIGR00133">
    <property type="entry name" value="gatB"/>
    <property type="match status" value="1"/>
</dbReference>
<dbReference type="NCBIfam" id="NF004012">
    <property type="entry name" value="PRK05477.1-2"/>
    <property type="match status" value="1"/>
</dbReference>
<dbReference type="NCBIfam" id="NF004014">
    <property type="entry name" value="PRK05477.1-4"/>
    <property type="match status" value="1"/>
</dbReference>
<dbReference type="PANTHER" id="PTHR11659">
    <property type="entry name" value="GLUTAMYL-TRNA GLN AMIDOTRANSFERASE SUBUNIT B MITOCHONDRIAL AND PROKARYOTIC PET112-RELATED"/>
    <property type="match status" value="1"/>
</dbReference>
<dbReference type="PANTHER" id="PTHR11659:SF0">
    <property type="entry name" value="GLUTAMYL-TRNA(GLN) AMIDOTRANSFERASE SUBUNIT B, MITOCHONDRIAL"/>
    <property type="match status" value="1"/>
</dbReference>
<dbReference type="Pfam" id="PF02934">
    <property type="entry name" value="GatB_N"/>
    <property type="match status" value="1"/>
</dbReference>
<dbReference type="Pfam" id="PF02637">
    <property type="entry name" value="GatB_Yqey"/>
    <property type="match status" value="1"/>
</dbReference>
<dbReference type="SMART" id="SM00845">
    <property type="entry name" value="GatB_Yqey"/>
    <property type="match status" value="1"/>
</dbReference>
<dbReference type="SUPFAM" id="SSF89095">
    <property type="entry name" value="GatB/YqeY motif"/>
    <property type="match status" value="1"/>
</dbReference>
<dbReference type="SUPFAM" id="SSF55931">
    <property type="entry name" value="Glutamine synthetase/guanido kinase"/>
    <property type="match status" value="1"/>
</dbReference>
<dbReference type="PROSITE" id="PS01234">
    <property type="entry name" value="GATB"/>
    <property type="match status" value="1"/>
</dbReference>
<comment type="function">
    <text evidence="1">Allows the formation of correctly charged Asn-tRNA(Asn) or Gln-tRNA(Gln) through the transamidation of misacylated Asp-tRNA(Asn) or Glu-tRNA(Gln) in organisms which lack either or both of asparaginyl-tRNA or glutaminyl-tRNA synthetases. The reaction takes place in the presence of glutamine and ATP through an activated phospho-Asp-tRNA(Asn) or phospho-Glu-tRNA(Gln).</text>
</comment>
<comment type="catalytic activity">
    <reaction evidence="1">
        <text>L-glutamyl-tRNA(Gln) + L-glutamine + ATP + H2O = L-glutaminyl-tRNA(Gln) + L-glutamate + ADP + phosphate + H(+)</text>
        <dbReference type="Rhea" id="RHEA:17521"/>
        <dbReference type="Rhea" id="RHEA-COMP:9681"/>
        <dbReference type="Rhea" id="RHEA-COMP:9684"/>
        <dbReference type="ChEBI" id="CHEBI:15377"/>
        <dbReference type="ChEBI" id="CHEBI:15378"/>
        <dbReference type="ChEBI" id="CHEBI:29985"/>
        <dbReference type="ChEBI" id="CHEBI:30616"/>
        <dbReference type="ChEBI" id="CHEBI:43474"/>
        <dbReference type="ChEBI" id="CHEBI:58359"/>
        <dbReference type="ChEBI" id="CHEBI:78520"/>
        <dbReference type="ChEBI" id="CHEBI:78521"/>
        <dbReference type="ChEBI" id="CHEBI:456216"/>
    </reaction>
</comment>
<comment type="catalytic activity">
    <reaction evidence="1">
        <text>L-aspartyl-tRNA(Asn) + L-glutamine + ATP + H2O = L-asparaginyl-tRNA(Asn) + L-glutamate + ADP + phosphate + 2 H(+)</text>
        <dbReference type="Rhea" id="RHEA:14513"/>
        <dbReference type="Rhea" id="RHEA-COMP:9674"/>
        <dbReference type="Rhea" id="RHEA-COMP:9677"/>
        <dbReference type="ChEBI" id="CHEBI:15377"/>
        <dbReference type="ChEBI" id="CHEBI:15378"/>
        <dbReference type="ChEBI" id="CHEBI:29985"/>
        <dbReference type="ChEBI" id="CHEBI:30616"/>
        <dbReference type="ChEBI" id="CHEBI:43474"/>
        <dbReference type="ChEBI" id="CHEBI:58359"/>
        <dbReference type="ChEBI" id="CHEBI:78515"/>
        <dbReference type="ChEBI" id="CHEBI:78516"/>
        <dbReference type="ChEBI" id="CHEBI:456216"/>
    </reaction>
</comment>
<comment type="subunit">
    <text evidence="1">Heterotrimer of A, B and C subunits.</text>
</comment>
<comment type="similarity">
    <text evidence="1">Belongs to the GatB/GatE family. GatB subfamily.</text>
</comment>
<comment type="sequence caution" evidence="2">
    <conflict type="erroneous initiation">
        <sequence resource="EMBL-CDS" id="CAE77379"/>
    </conflict>
</comment>
<reference key="1">
    <citation type="journal article" date="2004" name="Genome Res.">
        <title>The genome sequence of Mycoplasma mycoides subsp. mycoides SC type strain PG1T, the causative agent of contagious bovine pleuropneumonia (CBPP).</title>
        <authorList>
            <person name="Westberg J."/>
            <person name="Persson A."/>
            <person name="Holmberg A."/>
            <person name="Goesmann A."/>
            <person name="Lundeberg J."/>
            <person name="Johansson K.-E."/>
            <person name="Pettersson B."/>
            <person name="Uhlen M."/>
        </authorList>
    </citation>
    <scope>NUCLEOTIDE SEQUENCE [LARGE SCALE GENOMIC DNA]</scope>
    <source>
        <strain>CCUG 32753 / NCTC 10114 / PG1</strain>
    </source>
</reference>
<accession>P61345</accession>
<gene>
    <name evidence="1" type="primary">gatB</name>
    <name type="ordered locus">MSC_0761</name>
</gene>
<feature type="chain" id="PRO_0000148808" description="Aspartyl/glutamyl-tRNA(Asn/Gln) amidotransferase subunit B">
    <location>
        <begin position="1"/>
        <end position="479"/>
    </location>
</feature>
<sequence length="479" mass="54911">MQNFEIIIGVENHVELKTNSKMFSPSKVSYGQTPNTLANEIDLAYPGTLPSVNKKGVELAILACNALNMQIDTLLTFDRKNYFYPDLTKGFQITQQFNPIGKNGSLEIILENGNKKVIEIERLHIEEDTAKQVHKDNLTYLDYNRSGVGLIEIVTKPVLRSAEEACLYVEKLREILLFLNVSDVKMNEGSLRTDLNISLRPYGSDKFSNKVEIKNLNSISNIKKAVEFEINRQKEILLKNQIVEQQTRRFDDQTSSTILMRSKIDSIDYRYFREPNIFPIQLDQKWVDQIISNSPELADQKRIRYVNELGLTSEDANIILTSLEMTNFFEKTIKLTTNYNKVAKMLISEIQAKLNLENKTIDQIKLSPENLASVINLIDKNIISSKQTKVVMPIILDSNTETVEQIVERLNLKLITNKDEISKLLVNIINQNKELLNQYSTRPERVIKTIMGQLMKQTNGNVDPEIANEIVIKEIEKNL</sequence>
<organism>
    <name type="scientific">Mycoplasma mycoides subsp. mycoides SC (strain CCUG 32753 / NCTC 10114 / PG1)</name>
    <dbReference type="NCBI Taxonomy" id="272632"/>
    <lineage>
        <taxon>Bacteria</taxon>
        <taxon>Bacillati</taxon>
        <taxon>Mycoplasmatota</taxon>
        <taxon>Mollicutes</taxon>
        <taxon>Mycoplasmataceae</taxon>
        <taxon>Mycoplasma</taxon>
    </lineage>
</organism>
<keyword id="KW-0067">ATP-binding</keyword>
<keyword id="KW-0436">Ligase</keyword>
<keyword id="KW-0547">Nucleotide-binding</keyword>
<keyword id="KW-0648">Protein biosynthesis</keyword>
<keyword id="KW-1185">Reference proteome</keyword>
<proteinExistence type="inferred from homology"/>
<protein>
    <recommendedName>
        <fullName evidence="1">Aspartyl/glutamyl-tRNA(Asn/Gln) amidotransferase subunit B</fullName>
        <shortName evidence="1">Asp/Glu-ADT subunit B</shortName>
        <ecNumber evidence="1">6.3.5.-</ecNumber>
    </recommendedName>
</protein>
<evidence type="ECO:0000255" key="1">
    <source>
        <dbReference type="HAMAP-Rule" id="MF_00121"/>
    </source>
</evidence>
<evidence type="ECO:0000305" key="2"/>
<name>GATB_MYCMS</name>